<comment type="function">
    <text evidence="1">Binds 23S rRNA and is also seen to make contacts with the A and possibly P site tRNAs.</text>
</comment>
<comment type="subunit">
    <text evidence="1">Part of the 50S ribosomal subunit.</text>
</comment>
<comment type="similarity">
    <text evidence="1">Belongs to the universal ribosomal protein uL16 family.</text>
</comment>
<reference key="1">
    <citation type="submission" date="2006-08" db="EMBL/GenBank/DDBJ databases">
        <title>Complete sequence of chromosome 1 of Shewanella sp. MR-7.</title>
        <authorList>
            <person name="Copeland A."/>
            <person name="Lucas S."/>
            <person name="Lapidus A."/>
            <person name="Barry K."/>
            <person name="Detter J.C."/>
            <person name="Glavina del Rio T."/>
            <person name="Hammon N."/>
            <person name="Israni S."/>
            <person name="Dalin E."/>
            <person name="Tice H."/>
            <person name="Pitluck S."/>
            <person name="Kiss H."/>
            <person name="Brettin T."/>
            <person name="Bruce D."/>
            <person name="Han C."/>
            <person name="Tapia R."/>
            <person name="Gilna P."/>
            <person name="Schmutz J."/>
            <person name="Larimer F."/>
            <person name="Land M."/>
            <person name="Hauser L."/>
            <person name="Kyrpides N."/>
            <person name="Mikhailova N."/>
            <person name="Nealson K."/>
            <person name="Konstantinidis K."/>
            <person name="Klappenbach J."/>
            <person name="Tiedje J."/>
            <person name="Richardson P."/>
        </authorList>
    </citation>
    <scope>NUCLEOTIDE SEQUENCE [LARGE SCALE GENOMIC DNA]</scope>
    <source>
        <strain>MR-7</strain>
    </source>
</reference>
<keyword id="KW-0687">Ribonucleoprotein</keyword>
<keyword id="KW-0689">Ribosomal protein</keyword>
<keyword id="KW-0694">RNA-binding</keyword>
<keyword id="KW-0699">rRNA-binding</keyword>
<keyword id="KW-0820">tRNA-binding</keyword>
<sequence length="136" mass="15396">MLQPKRMKFRKMFKGRNRGLANGTEVSFGTFGLKAVGRGRLTARQIESARRAMTRHIKRQGQIWIRVFPDKPITSKPLEVRMGKGKGNVEYWVCQIQPGKVLYEMNGVSEVIAREAFALAAAKLPIKTTFVTKTVM</sequence>
<proteinExistence type="inferred from homology"/>
<feature type="chain" id="PRO_1000054707" description="Large ribosomal subunit protein uL16">
    <location>
        <begin position="1"/>
        <end position="136"/>
    </location>
</feature>
<name>RL16_SHESR</name>
<protein>
    <recommendedName>
        <fullName evidence="1">Large ribosomal subunit protein uL16</fullName>
    </recommendedName>
    <alternativeName>
        <fullName evidence="2">50S ribosomal protein L16</fullName>
    </alternativeName>
</protein>
<gene>
    <name evidence="1" type="primary">rplP</name>
    <name type="ordered locus">Shewmr7_0201</name>
</gene>
<dbReference type="EMBL" id="CP000444">
    <property type="protein sequence ID" value="ABI41207.1"/>
    <property type="molecule type" value="Genomic_DNA"/>
</dbReference>
<dbReference type="SMR" id="Q0I098"/>
<dbReference type="KEGG" id="shm:Shewmr7_0201"/>
<dbReference type="HOGENOM" id="CLU_078858_2_1_6"/>
<dbReference type="GO" id="GO:0022625">
    <property type="term" value="C:cytosolic large ribosomal subunit"/>
    <property type="evidence" value="ECO:0007669"/>
    <property type="project" value="TreeGrafter"/>
</dbReference>
<dbReference type="GO" id="GO:0019843">
    <property type="term" value="F:rRNA binding"/>
    <property type="evidence" value="ECO:0007669"/>
    <property type="project" value="UniProtKB-UniRule"/>
</dbReference>
<dbReference type="GO" id="GO:0003735">
    <property type="term" value="F:structural constituent of ribosome"/>
    <property type="evidence" value="ECO:0007669"/>
    <property type="project" value="InterPro"/>
</dbReference>
<dbReference type="GO" id="GO:0000049">
    <property type="term" value="F:tRNA binding"/>
    <property type="evidence" value="ECO:0007669"/>
    <property type="project" value="UniProtKB-KW"/>
</dbReference>
<dbReference type="GO" id="GO:0006412">
    <property type="term" value="P:translation"/>
    <property type="evidence" value="ECO:0007669"/>
    <property type="project" value="UniProtKB-UniRule"/>
</dbReference>
<dbReference type="CDD" id="cd01433">
    <property type="entry name" value="Ribosomal_L16_L10e"/>
    <property type="match status" value="1"/>
</dbReference>
<dbReference type="FunFam" id="3.90.1170.10:FF:000001">
    <property type="entry name" value="50S ribosomal protein L16"/>
    <property type="match status" value="1"/>
</dbReference>
<dbReference type="Gene3D" id="3.90.1170.10">
    <property type="entry name" value="Ribosomal protein L10e/L16"/>
    <property type="match status" value="1"/>
</dbReference>
<dbReference type="HAMAP" id="MF_01342">
    <property type="entry name" value="Ribosomal_uL16"/>
    <property type="match status" value="1"/>
</dbReference>
<dbReference type="InterPro" id="IPR047873">
    <property type="entry name" value="Ribosomal_uL16"/>
</dbReference>
<dbReference type="InterPro" id="IPR000114">
    <property type="entry name" value="Ribosomal_uL16_bact-type"/>
</dbReference>
<dbReference type="InterPro" id="IPR020798">
    <property type="entry name" value="Ribosomal_uL16_CS"/>
</dbReference>
<dbReference type="InterPro" id="IPR016180">
    <property type="entry name" value="Ribosomal_uL16_dom"/>
</dbReference>
<dbReference type="InterPro" id="IPR036920">
    <property type="entry name" value="Ribosomal_uL16_sf"/>
</dbReference>
<dbReference type="NCBIfam" id="TIGR01164">
    <property type="entry name" value="rplP_bact"/>
    <property type="match status" value="1"/>
</dbReference>
<dbReference type="PANTHER" id="PTHR12220">
    <property type="entry name" value="50S/60S RIBOSOMAL PROTEIN L16"/>
    <property type="match status" value="1"/>
</dbReference>
<dbReference type="PANTHER" id="PTHR12220:SF13">
    <property type="entry name" value="LARGE RIBOSOMAL SUBUNIT PROTEIN UL16M"/>
    <property type="match status" value="1"/>
</dbReference>
<dbReference type="Pfam" id="PF00252">
    <property type="entry name" value="Ribosomal_L16"/>
    <property type="match status" value="1"/>
</dbReference>
<dbReference type="PRINTS" id="PR00060">
    <property type="entry name" value="RIBOSOMALL16"/>
</dbReference>
<dbReference type="SUPFAM" id="SSF54686">
    <property type="entry name" value="Ribosomal protein L16p/L10e"/>
    <property type="match status" value="1"/>
</dbReference>
<dbReference type="PROSITE" id="PS00586">
    <property type="entry name" value="RIBOSOMAL_L16_1"/>
    <property type="match status" value="1"/>
</dbReference>
<dbReference type="PROSITE" id="PS00701">
    <property type="entry name" value="RIBOSOMAL_L16_2"/>
    <property type="match status" value="1"/>
</dbReference>
<evidence type="ECO:0000255" key="1">
    <source>
        <dbReference type="HAMAP-Rule" id="MF_01342"/>
    </source>
</evidence>
<evidence type="ECO:0000305" key="2"/>
<accession>Q0I098</accession>
<organism>
    <name type="scientific">Shewanella sp. (strain MR-7)</name>
    <dbReference type="NCBI Taxonomy" id="60481"/>
    <lineage>
        <taxon>Bacteria</taxon>
        <taxon>Pseudomonadati</taxon>
        <taxon>Pseudomonadota</taxon>
        <taxon>Gammaproteobacteria</taxon>
        <taxon>Alteromonadales</taxon>
        <taxon>Shewanellaceae</taxon>
        <taxon>Shewanella</taxon>
    </lineage>
</organism>